<proteinExistence type="inferred from homology"/>
<organism>
    <name type="scientific">Brucella abortus biovar 1 (strain 9-941)</name>
    <dbReference type="NCBI Taxonomy" id="262698"/>
    <lineage>
        <taxon>Bacteria</taxon>
        <taxon>Pseudomonadati</taxon>
        <taxon>Pseudomonadota</taxon>
        <taxon>Alphaproteobacteria</taxon>
        <taxon>Hyphomicrobiales</taxon>
        <taxon>Brucellaceae</taxon>
        <taxon>Brucella/Ochrobactrum group</taxon>
        <taxon>Brucella</taxon>
    </lineage>
</organism>
<dbReference type="EMBL" id="AE017224">
    <property type="protein sequence ID" value="AAX76026.1"/>
    <property type="molecule type" value="Genomic_DNA"/>
</dbReference>
<dbReference type="RefSeq" id="WP_002966024.1">
    <property type="nucleotide sequence ID" value="NC_006933.1"/>
</dbReference>
<dbReference type="SMR" id="Q578A8"/>
<dbReference type="EnsemblBacteria" id="AAX76026">
    <property type="protein sequence ID" value="AAX76026"/>
    <property type="gene ID" value="BruAb2_0615"/>
</dbReference>
<dbReference type="GeneID" id="97535268"/>
<dbReference type="KEGG" id="bmb:BruAb2_0615"/>
<dbReference type="HOGENOM" id="CLU_190949_1_1_5"/>
<dbReference type="Proteomes" id="UP000000540">
    <property type="component" value="Chromosome II"/>
</dbReference>
<dbReference type="GO" id="GO:0022625">
    <property type="term" value="C:cytosolic large ribosomal subunit"/>
    <property type="evidence" value="ECO:0007669"/>
    <property type="project" value="TreeGrafter"/>
</dbReference>
<dbReference type="GO" id="GO:0003735">
    <property type="term" value="F:structural constituent of ribosome"/>
    <property type="evidence" value="ECO:0007669"/>
    <property type="project" value="InterPro"/>
</dbReference>
<dbReference type="GO" id="GO:0006412">
    <property type="term" value="P:translation"/>
    <property type="evidence" value="ECO:0007669"/>
    <property type="project" value="UniProtKB-UniRule"/>
</dbReference>
<dbReference type="Gene3D" id="2.20.28.120">
    <property type="entry name" value="Ribosomal protein L33"/>
    <property type="match status" value="1"/>
</dbReference>
<dbReference type="HAMAP" id="MF_00294">
    <property type="entry name" value="Ribosomal_bL33"/>
    <property type="match status" value="1"/>
</dbReference>
<dbReference type="InterPro" id="IPR001705">
    <property type="entry name" value="Ribosomal_bL33"/>
</dbReference>
<dbReference type="InterPro" id="IPR018264">
    <property type="entry name" value="Ribosomal_bL33_CS"/>
</dbReference>
<dbReference type="InterPro" id="IPR038584">
    <property type="entry name" value="Ribosomal_bL33_sf"/>
</dbReference>
<dbReference type="InterPro" id="IPR011332">
    <property type="entry name" value="Ribosomal_zn-bd"/>
</dbReference>
<dbReference type="NCBIfam" id="NF001860">
    <property type="entry name" value="PRK00595.1"/>
    <property type="match status" value="1"/>
</dbReference>
<dbReference type="NCBIfam" id="TIGR01023">
    <property type="entry name" value="rpmG_bact"/>
    <property type="match status" value="1"/>
</dbReference>
<dbReference type="PANTHER" id="PTHR15238">
    <property type="entry name" value="54S RIBOSOMAL PROTEIN L39, MITOCHONDRIAL"/>
    <property type="match status" value="1"/>
</dbReference>
<dbReference type="PANTHER" id="PTHR15238:SF1">
    <property type="entry name" value="LARGE RIBOSOMAL SUBUNIT PROTEIN BL33M"/>
    <property type="match status" value="1"/>
</dbReference>
<dbReference type="Pfam" id="PF00471">
    <property type="entry name" value="Ribosomal_L33"/>
    <property type="match status" value="1"/>
</dbReference>
<dbReference type="SUPFAM" id="SSF57829">
    <property type="entry name" value="Zn-binding ribosomal proteins"/>
    <property type="match status" value="1"/>
</dbReference>
<dbReference type="PROSITE" id="PS00582">
    <property type="entry name" value="RIBOSOMAL_L33"/>
    <property type="match status" value="1"/>
</dbReference>
<feature type="chain" id="PRO_0000356408" description="Large ribosomal subunit protein bL33">
    <location>
        <begin position="1"/>
        <end position="55"/>
    </location>
</feature>
<gene>
    <name evidence="1" type="primary">rpmG</name>
    <name type="ordered locus">BruAb2_0615</name>
</gene>
<accession>Q578A8</accession>
<reference key="1">
    <citation type="journal article" date="2005" name="J. Bacteriol.">
        <title>Completion of the genome sequence of Brucella abortus and comparison to the highly similar genomes of Brucella melitensis and Brucella suis.</title>
        <authorList>
            <person name="Halling S.M."/>
            <person name="Peterson-Burch B.D."/>
            <person name="Bricker B.J."/>
            <person name="Zuerner R.L."/>
            <person name="Qing Z."/>
            <person name="Li L.-L."/>
            <person name="Kapur V."/>
            <person name="Alt D.P."/>
            <person name="Olsen S.C."/>
        </authorList>
    </citation>
    <scope>NUCLEOTIDE SEQUENCE [LARGE SCALE GENOMIC DNA]</scope>
    <source>
        <strain>9-941</strain>
    </source>
</reference>
<keyword id="KW-0687">Ribonucleoprotein</keyword>
<keyword id="KW-0689">Ribosomal protein</keyword>
<evidence type="ECO:0000255" key="1">
    <source>
        <dbReference type="HAMAP-Rule" id="MF_00294"/>
    </source>
</evidence>
<evidence type="ECO:0000305" key="2"/>
<comment type="similarity">
    <text evidence="1">Belongs to the bacterial ribosomal protein bL33 family.</text>
</comment>
<name>RL33_BRUAB</name>
<protein>
    <recommendedName>
        <fullName evidence="1">Large ribosomal subunit protein bL33</fullName>
    </recommendedName>
    <alternativeName>
        <fullName evidence="2">50S ribosomal protein L33</fullName>
    </alternativeName>
</protein>
<sequence length="55" mass="6400">MAKATTIKIKLLSTADTGFFYVTKKNSRTMTEKMTKTKYDPIARKHVEFKETKIK</sequence>